<comment type="function">
    <text evidence="2 3 5">Binds voltage-dependently at site 3 of sodium channels (Nav) and inhibits the inactivation of the activated channels, thereby blocking neuronal transmission. Has effect on SCN4A/SCN1B, and SCN5A/SCN1B, has no effect on SCN2A/SCN1B, and SCN10A/SCN1B. Possesses the highest efficacy for the insect sodium channel para/tipE. Also interacts with sodium channels in cardiac cells. Shows lethality to crabs (PubMed:22015268).</text>
</comment>
<comment type="subcellular location">
    <subcellularLocation>
        <location evidence="8">Secreted</location>
    </subcellularLocation>
    <subcellularLocation>
        <location evidence="8">Nematocyst</location>
    </subcellularLocation>
</comment>
<comment type="mass spectrometry"/>
<comment type="mass spectrometry"/>
<comment type="toxic dose">
    <text evidence="5">LD(50) is 21 ug/kg by intracerebroventricular injection into mice.</text>
</comment>
<comment type="similarity">
    <text evidence="8">Belongs to the sea anemone sodium channel inhibitory toxin family. Type I subfamily.</text>
</comment>
<evidence type="ECO:0000250" key="1">
    <source>
        <dbReference type="UniProtKB" id="P01530"/>
    </source>
</evidence>
<evidence type="ECO:0000269" key="2">
    <source>
    </source>
</evidence>
<evidence type="ECO:0000269" key="3">
    <source>
    </source>
</evidence>
<evidence type="ECO:0000269" key="4">
    <source>
    </source>
</evidence>
<evidence type="ECO:0000269" key="5">
    <source>
    </source>
</evidence>
<evidence type="ECO:0000303" key="6">
    <source>
    </source>
</evidence>
<evidence type="ECO:0000303" key="7">
    <source>
    </source>
</evidence>
<evidence type="ECO:0000305" key="8"/>
<dbReference type="SMR" id="P0C1F5"/>
<dbReference type="GO" id="GO:0005576">
    <property type="term" value="C:extracellular region"/>
    <property type="evidence" value="ECO:0007669"/>
    <property type="project" value="UniProtKB-SubCell"/>
</dbReference>
<dbReference type="GO" id="GO:0042151">
    <property type="term" value="C:nematocyst"/>
    <property type="evidence" value="ECO:0007669"/>
    <property type="project" value="UniProtKB-SubCell"/>
</dbReference>
<dbReference type="GO" id="GO:0017080">
    <property type="term" value="F:sodium channel regulator activity"/>
    <property type="evidence" value="ECO:0007669"/>
    <property type="project" value="UniProtKB-KW"/>
</dbReference>
<dbReference type="GO" id="GO:0090729">
    <property type="term" value="F:toxin activity"/>
    <property type="evidence" value="ECO:0007669"/>
    <property type="project" value="UniProtKB-KW"/>
</dbReference>
<dbReference type="GO" id="GO:0009966">
    <property type="term" value="P:regulation of signal transduction"/>
    <property type="evidence" value="ECO:0007669"/>
    <property type="project" value="InterPro"/>
</dbReference>
<dbReference type="Gene3D" id="2.20.20.10">
    <property type="entry name" value="Anthopleurin-A"/>
    <property type="match status" value="1"/>
</dbReference>
<dbReference type="InterPro" id="IPR000693">
    <property type="entry name" value="Anenome_toxin"/>
</dbReference>
<dbReference type="InterPro" id="IPR023355">
    <property type="entry name" value="Myo_ane_neurotoxin_sf"/>
</dbReference>
<dbReference type="Pfam" id="PF00706">
    <property type="entry name" value="Toxin_4"/>
    <property type="match status" value="1"/>
</dbReference>
<dbReference type="PIRSF" id="PIRSF001905">
    <property type="entry name" value="Anenome_toxin"/>
    <property type="match status" value="1"/>
</dbReference>
<dbReference type="SUPFAM" id="SSF57392">
    <property type="entry name" value="Defensin-like"/>
    <property type="match status" value="1"/>
</dbReference>
<proteinExistence type="evidence at protein level"/>
<accession>P0C1F5</accession>
<organism>
    <name type="scientific">Bunodosoma granuliferum</name>
    <name type="common">Red warty sea anemone</name>
    <dbReference type="NCBI Taxonomy" id="31164"/>
    <lineage>
        <taxon>Eukaryota</taxon>
        <taxon>Metazoa</taxon>
        <taxon>Cnidaria</taxon>
        <taxon>Anthozoa</taxon>
        <taxon>Hexacorallia</taxon>
        <taxon>Actiniaria</taxon>
        <taxon>Actiniidae</taxon>
        <taxon>Bunodosoma</taxon>
    </lineage>
</organism>
<keyword id="KW-0123">Cardiotoxin</keyword>
<keyword id="KW-0903">Direct protein sequencing</keyword>
<keyword id="KW-1015">Disulfide bond</keyword>
<keyword id="KW-0872">Ion channel impairing toxin</keyword>
<keyword id="KW-0166">Nematocyst</keyword>
<keyword id="KW-0528">Neurotoxin</keyword>
<keyword id="KW-0964">Secreted</keyword>
<keyword id="KW-0800">Toxin</keyword>
<keyword id="KW-0738">Voltage-gated sodium channel impairing toxin</keyword>
<name>NA13_BUNGR</name>
<feature type="chain" id="PRO_0000236031" description="Delta-actitoxin-Bgr2b" evidence="2 5">
    <location>
        <begin position="1"/>
        <end position="48"/>
    </location>
</feature>
<feature type="disulfide bond" evidence="1">
    <location>
        <begin position="4"/>
        <end position="45"/>
    </location>
</feature>
<feature type="disulfide bond" evidence="1">
    <location>
        <begin position="6"/>
        <end position="35"/>
    </location>
</feature>
<feature type="disulfide bond" evidence="1">
    <location>
        <begin position="28"/>
        <end position="46"/>
    </location>
</feature>
<reference key="1">
    <citation type="journal article" date="1994" name="J. Biol. Chem.">
        <title>Positively charged amino acid residues located similarly in sea anemone and scorpion toxins.</title>
        <authorList>
            <person name="Loret E.P."/>
            <person name="del Valle R.M."/>
            <person name="Mansuelle P."/>
            <person name="Sampieri F."/>
            <person name="Rochat H."/>
        </authorList>
    </citation>
    <scope>PROTEIN SEQUENCE</scope>
    <scope>FUNCTION</scope>
    <scope>TOXIC DOSE</scope>
</reference>
<reference key="2">
    <citation type="journal article" date="2001" name="Br. J. Pharmacol.">
        <title>Characterization of two Bunodosoma granulifera toxins active on cardiac sodium channels.</title>
        <authorList>
            <person name="Goudet C."/>
            <person name="Ferrer T."/>
            <person name="Galan L."/>
            <person name="Artiles A."/>
            <person name="Batista C.V.F."/>
            <person name="Possani L.D."/>
            <person name="Alvarez J."/>
            <person name="Aneiros A."/>
            <person name="Tytgat J."/>
        </authorList>
    </citation>
    <scope>PROTEIN SEQUENCE</scope>
    <scope>FUNCTION</scope>
    <scope>MASS SPECTROMETRY</scope>
</reference>
<reference key="3">
    <citation type="journal article" date="2002" name="FEBS Lett.">
        <title>The sea anemone Bunodosoma granulifera contains surprisingly efficacious and potent insect-selective toxins.</title>
        <authorList>
            <person name="Bosmans F."/>
            <person name="Aneiros A."/>
            <person name="Tytgat J."/>
        </authorList>
    </citation>
    <scope>FUNCTION</scope>
</reference>
<reference key="4">
    <citation type="journal article" date="2012" name="Peptides">
        <title>Peptide fingerprinting of the neurotoxic fractions isolated from the secretions of sea anemones Stichodactyla helianthus and Bunodosoma granulifera. New members of the APETx-like family identified by a 454 pyrosequencing approach.</title>
        <authorList>
            <person name="Rodriguez A.A."/>
            <person name="Cassoli J.S."/>
            <person name="Sa F."/>
            <person name="Dong Z.Q."/>
            <person name="de Freitas J.C."/>
            <person name="Pimenta A.M."/>
            <person name="de Lima M.E."/>
            <person name="Konno K."/>
            <person name="Lee S.M."/>
            <person name="Garateix A."/>
            <person name="Zaharenko A.J."/>
        </authorList>
    </citation>
    <scope>MASS SPECTROMETRY</scope>
    <scope>FUNCTION</scope>
</reference>
<reference key="5">
    <citation type="journal article" date="2012" name="Toxicon">
        <title>Development of a rational nomenclature for naming peptide and protein toxins from sea anemones.</title>
        <authorList>
            <person name="Oliveira J.S."/>
            <person name="Fuentes-Silva D."/>
            <person name="King G.F."/>
        </authorList>
    </citation>
    <scope>NOMENCLATURE</scope>
</reference>
<sequence>GASCRCDSDGPTSRGDTLTGTLWLIGRCPSGWHNCRGSGPFIGYCCKQ</sequence>
<protein>
    <recommendedName>
        <fullName evidence="6">Delta-actitoxin-Bgr2b</fullName>
        <shortName evidence="6">Delta-AITX-Bgr2b</shortName>
    </recommendedName>
    <alternativeName>
        <fullName evidence="7">Bg III</fullName>
        <shortName>BgIII</shortName>
    </alternativeName>
    <alternativeName>
        <fullName>Neurotoxin Bg-3</fullName>
    </alternativeName>
</protein>